<feature type="chain" id="PRO_0000335060" description="Glutamyl-tRNA reductase">
    <location>
        <begin position="1"/>
        <end position="418"/>
    </location>
</feature>
<feature type="active site" description="Nucleophile" evidence="1">
    <location>
        <position position="50"/>
    </location>
</feature>
<feature type="binding site" evidence="1">
    <location>
        <begin position="49"/>
        <end position="52"/>
    </location>
    <ligand>
        <name>substrate</name>
    </ligand>
</feature>
<feature type="binding site" evidence="1">
    <location>
        <position position="107"/>
    </location>
    <ligand>
        <name>substrate</name>
    </ligand>
</feature>
<feature type="binding site" evidence="1">
    <location>
        <begin position="112"/>
        <end position="114"/>
    </location>
    <ligand>
        <name>substrate</name>
    </ligand>
</feature>
<feature type="binding site" evidence="1">
    <location>
        <position position="118"/>
    </location>
    <ligand>
        <name>substrate</name>
    </ligand>
</feature>
<feature type="binding site" evidence="1">
    <location>
        <begin position="187"/>
        <end position="192"/>
    </location>
    <ligand>
        <name>NADP(+)</name>
        <dbReference type="ChEBI" id="CHEBI:58349"/>
    </ligand>
</feature>
<feature type="site" description="Important for activity" evidence="1">
    <location>
        <position position="97"/>
    </location>
</feature>
<sequence length="418" mass="46338">MTIIALGINHKTAPVELREKVAFSPEQISEALQQLSGHAHFNEAVIVSTCNRTEVYCSLAQQNSQTLLQWLSSFHGLDEHELSKNIYCHEGSDAINHLMRVACGLDSLVLGEPQILGQIKQAYNSAKTHNAVGVTFDRLFQKTFSVAKQVRTETNIGASAVSVAYAAVNLAKHIYGKLDKTNVLLIGAGETIELVAKHLYQNEPQNITVANRTLERARSLADQVSGDVIALAQLPERLHKADIVISSTASTLPIIGKGVVEQALKQRRYKPMLFIDIAVPRDIESQVGELDDAYLYSVDDLQTIVSENMSAREEAAEQAEVIITERTKEFLMWIRSLDSVDLIRHYRNDVQTIKSELVERAVSQLNTGKDAEKVILELANKLTNRLMHAPTRAIQDAAKKGEVAQLNQLKKMLGIDQE</sequence>
<comment type="function">
    <text evidence="1">Catalyzes the NADPH-dependent reduction of glutamyl-tRNA(Glu) to glutamate 1-semialdehyde (GSA).</text>
</comment>
<comment type="catalytic activity">
    <reaction evidence="1">
        <text>(S)-4-amino-5-oxopentanoate + tRNA(Glu) + NADP(+) = L-glutamyl-tRNA(Glu) + NADPH + H(+)</text>
        <dbReference type="Rhea" id="RHEA:12344"/>
        <dbReference type="Rhea" id="RHEA-COMP:9663"/>
        <dbReference type="Rhea" id="RHEA-COMP:9680"/>
        <dbReference type="ChEBI" id="CHEBI:15378"/>
        <dbReference type="ChEBI" id="CHEBI:57501"/>
        <dbReference type="ChEBI" id="CHEBI:57783"/>
        <dbReference type="ChEBI" id="CHEBI:58349"/>
        <dbReference type="ChEBI" id="CHEBI:78442"/>
        <dbReference type="ChEBI" id="CHEBI:78520"/>
        <dbReference type="EC" id="1.2.1.70"/>
    </reaction>
</comment>
<comment type="pathway">
    <text evidence="1">Porphyrin-containing compound metabolism; protoporphyrin-IX biosynthesis; 5-aminolevulinate from L-glutamyl-tRNA(Glu): step 1/2.</text>
</comment>
<comment type="subunit">
    <text evidence="1">Homodimer.</text>
</comment>
<comment type="domain">
    <text evidence="1">Possesses an unusual extended V-shaped dimeric structure with each monomer consisting of three distinct domains arranged along a curved 'spinal' alpha-helix. The N-terminal catalytic domain specifically recognizes the glutamate moiety of the substrate. The second domain is the NADPH-binding domain, and the third C-terminal domain is responsible for dimerization.</text>
</comment>
<comment type="miscellaneous">
    <text evidence="1">During catalysis, the active site Cys acts as a nucleophile attacking the alpha-carbonyl group of tRNA-bound glutamate with the formation of a thioester intermediate between enzyme and glutamate, and the concomitant release of tRNA(Glu). The thioester intermediate is finally reduced by direct hydride transfer from NADPH, to form the product GSA.</text>
</comment>
<comment type="similarity">
    <text evidence="1">Belongs to the glutamyl-tRNA reductase family.</text>
</comment>
<comment type="sequence caution" evidence="2">
    <conflict type="erroneous initiation">
        <sequence resource="EMBL-CDS" id="CAI86132"/>
    </conflict>
</comment>
<dbReference type="EC" id="1.2.1.70" evidence="1"/>
<dbReference type="EMBL" id="CR954246">
    <property type="protein sequence ID" value="CAI86132.1"/>
    <property type="status" value="ALT_INIT"/>
    <property type="molecule type" value="Genomic_DNA"/>
</dbReference>
<dbReference type="SMR" id="Q3IK96"/>
<dbReference type="STRING" id="326442.PSHAa1057"/>
<dbReference type="KEGG" id="pha:PSHAa1057"/>
<dbReference type="PATRIC" id="fig|326442.8.peg.1014"/>
<dbReference type="eggNOG" id="COG0373">
    <property type="taxonomic scope" value="Bacteria"/>
</dbReference>
<dbReference type="HOGENOM" id="CLU_035113_2_2_6"/>
<dbReference type="UniPathway" id="UPA00251">
    <property type="reaction ID" value="UER00316"/>
</dbReference>
<dbReference type="Proteomes" id="UP000006843">
    <property type="component" value="Chromosome I"/>
</dbReference>
<dbReference type="GO" id="GO:0008883">
    <property type="term" value="F:glutamyl-tRNA reductase activity"/>
    <property type="evidence" value="ECO:0007669"/>
    <property type="project" value="UniProtKB-UniRule"/>
</dbReference>
<dbReference type="GO" id="GO:0050661">
    <property type="term" value="F:NADP binding"/>
    <property type="evidence" value="ECO:0007669"/>
    <property type="project" value="InterPro"/>
</dbReference>
<dbReference type="GO" id="GO:0019353">
    <property type="term" value="P:protoporphyrinogen IX biosynthetic process from glutamate"/>
    <property type="evidence" value="ECO:0007669"/>
    <property type="project" value="TreeGrafter"/>
</dbReference>
<dbReference type="CDD" id="cd05213">
    <property type="entry name" value="NAD_bind_Glutamyl_tRNA_reduct"/>
    <property type="match status" value="1"/>
</dbReference>
<dbReference type="FunFam" id="3.30.460.30:FF:000001">
    <property type="entry name" value="Glutamyl-tRNA reductase"/>
    <property type="match status" value="1"/>
</dbReference>
<dbReference type="FunFam" id="3.40.50.720:FF:000031">
    <property type="entry name" value="Glutamyl-tRNA reductase"/>
    <property type="match status" value="1"/>
</dbReference>
<dbReference type="Gene3D" id="3.30.460.30">
    <property type="entry name" value="Glutamyl-tRNA reductase, N-terminal domain"/>
    <property type="match status" value="1"/>
</dbReference>
<dbReference type="Gene3D" id="3.40.50.720">
    <property type="entry name" value="NAD(P)-binding Rossmann-like Domain"/>
    <property type="match status" value="1"/>
</dbReference>
<dbReference type="HAMAP" id="MF_00087">
    <property type="entry name" value="Glu_tRNA_reductase"/>
    <property type="match status" value="1"/>
</dbReference>
<dbReference type="InterPro" id="IPR000343">
    <property type="entry name" value="4pyrrol_synth_GluRdtase"/>
</dbReference>
<dbReference type="InterPro" id="IPR015896">
    <property type="entry name" value="4pyrrol_synth_GluRdtase_dimer"/>
</dbReference>
<dbReference type="InterPro" id="IPR015895">
    <property type="entry name" value="4pyrrol_synth_GluRdtase_N"/>
</dbReference>
<dbReference type="InterPro" id="IPR018214">
    <property type="entry name" value="GluRdtase_CS"/>
</dbReference>
<dbReference type="InterPro" id="IPR036453">
    <property type="entry name" value="GluRdtase_dimer_dom_sf"/>
</dbReference>
<dbReference type="InterPro" id="IPR036343">
    <property type="entry name" value="GluRdtase_N_sf"/>
</dbReference>
<dbReference type="InterPro" id="IPR036291">
    <property type="entry name" value="NAD(P)-bd_dom_sf"/>
</dbReference>
<dbReference type="InterPro" id="IPR006151">
    <property type="entry name" value="Shikm_DH/Glu-tRNA_Rdtase"/>
</dbReference>
<dbReference type="NCBIfam" id="TIGR01035">
    <property type="entry name" value="hemA"/>
    <property type="match status" value="1"/>
</dbReference>
<dbReference type="PANTHER" id="PTHR43013">
    <property type="entry name" value="GLUTAMYL-TRNA REDUCTASE"/>
    <property type="match status" value="1"/>
</dbReference>
<dbReference type="PANTHER" id="PTHR43013:SF1">
    <property type="entry name" value="GLUTAMYL-TRNA REDUCTASE"/>
    <property type="match status" value="1"/>
</dbReference>
<dbReference type="Pfam" id="PF00745">
    <property type="entry name" value="GlutR_dimer"/>
    <property type="match status" value="1"/>
</dbReference>
<dbReference type="Pfam" id="PF05201">
    <property type="entry name" value="GlutR_N"/>
    <property type="match status" value="1"/>
</dbReference>
<dbReference type="Pfam" id="PF01488">
    <property type="entry name" value="Shikimate_DH"/>
    <property type="match status" value="1"/>
</dbReference>
<dbReference type="PIRSF" id="PIRSF000445">
    <property type="entry name" value="4pyrrol_synth_GluRdtase"/>
    <property type="match status" value="1"/>
</dbReference>
<dbReference type="SUPFAM" id="SSF69742">
    <property type="entry name" value="Glutamyl tRNA-reductase catalytic, N-terminal domain"/>
    <property type="match status" value="1"/>
</dbReference>
<dbReference type="SUPFAM" id="SSF69075">
    <property type="entry name" value="Glutamyl tRNA-reductase dimerization domain"/>
    <property type="match status" value="1"/>
</dbReference>
<dbReference type="SUPFAM" id="SSF51735">
    <property type="entry name" value="NAD(P)-binding Rossmann-fold domains"/>
    <property type="match status" value="1"/>
</dbReference>
<dbReference type="PROSITE" id="PS00747">
    <property type="entry name" value="GLUTR"/>
    <property type="match status" value="1"/>
</dbReference>
<evidence type="ECO:0000255" key="1">
    <source>
        <dbReference type="HAMAP-Rule" id="MF_00087"/>
    </source>
</evidence>
<evidence type="ECO:0000305" key="2"/>
<proteinExistence type="inferred from homology"/>
<protein>
    <recommendedName>
        <fullName evidence="1">Glutamyl-tRNA reductase</fullName>
        <shortName evidence="1">GluTR</shortName>
        <ecNumber evidence="1">1.2.1.70</ecNumber>
    </recommendedName>
</protein>
<reference key="1">
    <citation type="journal article" date="2005" name="Genome Res.">
        <title>Coping with cold: the genome of the versatile marine Antarctica bacterium Pseudoalteromonas haloplanktis TAC125.</title>
        <authorList>
            <person name="Medigue C."/>
            <person name="Krin E."/>
            <person name="Pascal G."/>
            <person name="Barbe V."/>
            <person name="Bernsel A."/>
            <person name="Bertin P.N."/>
            <person name="Cheung F."/>
            <person name="Cruveiller S."/>
            <person name="D'Amico S."/>
            <person name="Duilio A."/>
            <person name="Fang G."/>
            <person name="Feller G."/>
            <person name="Ho C."/>
            <person name="Mangenot S."/>
            <person name="Marino G."/>
            <person name="Nilsson J."/>
            <person name="Parrilli E."/>
            <person name="Rocha E.P.C."/>
            <person name="Rouy Z."/>
            <person name="Sekowska A."/>
            <person name="Tutino M.L."/>
            <person name="Vallenet D."/>
            <person name="von Heijne G."/>
            <person name="Danchin A."/>
        </authorList>
    </citation>
    <scope>NUCLEOTIDE SEQUENCE [LARGE SCALE GENOMIC DNA]</scope>
    <source>
        <strain>TAC 125</strain>
    </source>
</reference>
<accession>Q3IK96</accession>
<gene>
    <name evidence="1" type="primary">hemA</name>
    <name type="ordered locus">PSHAa1057</name>
</gene>
<organism>
    <name type="scientific">Pseudoalteromonas translucida (strain TAC 125)</name>
    <dbReference type="NCBI Taxonomy" id="326442"/>
    <lineage>
        <taxon>Bacteria</taxon>
        <taxon>Pseudomonadati</taxon>
        <taxon>Pseudomonadota</taxon>
        <taxon>Gammaproteobacteria</taxon>
        <taxon>Alteromonadales</taxon>
        <taxon>Pseudoalteromonadaceae</taxon>
        <taxon>Pseudoalteromonas</taxon>
    </lineage>
</organism>
<name>HEM1_PSET1</name>
<keyword id="KW-0521">NADP</keyword>
<keyword id="KW-0560">Oxidoreductase</keyword>
<keyword id="KW-0627">Porphyrin biosynthesis</keyword>
<keyword id="KW-1185">Reference proteome</keyword>